<feature type="chain" id="PRO_0000277968" description="Large ribosomal subunit protein uL10">
    <location>
        <begin position="1"/>
        <end position="169"/>
    </location>
</feature>
<gene>
    <name evidence="1" type="primary">rplJ</name>
    <name type="ordered locus">RBE_1155</name>
</gene>
<dbReference type="EMBL" id="CP000087">
    <property type="protein sequence ID" value="ABE05236.1"/>
    <property type="molecule type" value="Genomic_DNA"/>
</dbReference>
<dbReference type="RefSeq" id="WP_011477814.1">
    <property type="nucleotide sequence ID" value="NC_007940.1"/>
</dbReference>
<dbReference type="SMR" id="Q1RHC8"/>
<dbReference type="KEGG" id="rbe:RBE_1155"/>
<dbReference type="eggNOG" id="COG0244">
    <property type="taxonomic scope" value="Bacteria"/>
</dbReference>
<dbReference type="HOGENOM" id="CLU_092227_0_0_5"/>
<dbReference type="OrthoDB" id="9791972at2"/>
<dbReference type="Proteomes" id="UP000001951">
    <property type="component" value="Chromosome"/>
</dbReference>
<dbReference type="GO" id="GO:0015934">
    <property type="term" value="C:large ribosomal subunit"/>
    <property type="evidence" value="ECO:0007669"/>
    <property type="project" value="InterPro"/>
</dbReference>
<dbReference type="GO" id="GO:0070180">
    <property type="term" value="F:large ribosomal subunit rRNA binding"/>
    <property type="evidence" value="ECO:0007669"/>
    <property type="project" value="UniProtKB-UniRule"/>
</dbReference>
<dbReference type="GO" id="GO:0003735">
    <property type="term" value="F:structural constituent of ribosome"/>
    <property type="evidence" value="ECO:0007669"/>
    <property type="project" value="InterPro"/>
</dbReference>
<dbReference type="GO" id="GO:0006412">
    <property type="term" value="P:translation"/>
    <property type="evidence" value="ECO:0007669"/>
    <property type="project" value="UniProtKB-UniRule"/>
</dbReference>
<dbReference type="CDD" id="cd05797">
    <property type="entry name" value="Ribosomal_L10"/>
    <property type="match status" value="1"/>
</dbReference>
<dbReference type="Gene3D" id="3.30.70.1730">
    <property type="match status" value="1"/>
</dbReference>
<dbReference type="Gene3D" id="6.10.250.290">
    <property type="match status" value="1"/>
</dbReference>
<dbReference type="HAMAP" id="MF_00362">
    <property type="entry name" value="Ribosomal_uL10"/>
    <property type="match status" value="1"/>
</dbReference>
<dbReference type="InterPro" id="IPR001790">
    <property type="entry name" value="Ribosomal_uL10"/>
</dbReference>
<dbReference type="InterPro" id="IPR043141">
    <property type="entry name" value="Ribosomal_uL10-like_sf"/>
</dbReference>
<dbReference type="InterPro" id="IPR022973">
    <property type="entry name" value="Ribosomal_uL10_bac"/>
</dbReference>
<dbReference type="InterPro" id="IPR047865">
    <property type="entry name" value="Ribosomal_uL10_bac_type"/>
</dbReference>
<dbReference type="InterPro" id="IPR002363">
    <property type="entry name" value="Ribosomal_uL10_CS_bac"/>
</dbReference>
<dbReference type="NCBIfam" id="NF000955">
    <property type="entry name" value="PRK00099.1-1"/>
    <property type="match status" value="1"/>
</dbReference>
<dbReference type="PANTHER" id="PTHR11560">
    <property type="entry name" value="39S RIBOSOMAL PROTEIN L10, MITOCHONDRIAL"/>
    <property type="match status" value="1"/>
</dbReference>
<dbReference type="Pfam" id="PF00466">
    <property type="entry name" value="Ribosomal_L10"/>
    <property type="match status" value="1"/>
</dbReference>
<dbReference type="SUPFAM" id="SSF160369">
    <property type="entry name" value="Ribosomal protein L10-like"/>
    <property type="match status" value="1"/>
</dbReference>
<dbReference type="PROSITE" id="PS01109">
    <property type="entry name" value="RIBOSOMAL_L10"/>
    <property type="match status" value="1"/>
</dbReference>
<evidence type="ECO:0000255" key="1">
    <source>
        <dbReference type="HAMAP-Rule" id="MF_00362"/>
    </source>
</evidence>
<evidence type="ECO:0000305" key="2"/>
<sequence length="169" mass="18102">MLRSEKPEVVEEIASIYKDSPSVIVAHYHGLTVSEVNSLRESLKSKDAGFKVVKNTLAKIAANKAGLDDIVSLFSGPTAIVYSKEPVEMAKLVVNFAKSNENLKIVGGIVDKQVLNEHSIKELSKLPSLNELRSKIVGLLQAPATKIAGVLQAPSSSLARVIQANASKN</sequence>
<reference key="1">
    <citation type="journal article" date="2006" name="PLoS Genet.">
        <title>Genome sequence of Rickettsia bellii illuminates the role of amoebae in gene exchanges between intracellular pathogens.</title>
        <authorList>
            <person name="Ogata H."/>
            <person name="La Scola B."/>
            <person name="Audic S."/>
            <person name="Renesto P."/>
            <person name="Blanc G."/>
            <person name="Robert C."/>
            <person name="Fournier P.-E."/>
            <person name="Claverie J.-M."/>
            <person name="Raoult D."/>
        </authorList>
    </citation>
    <scope>NUCLEOTIDE SEQUENCE [LARGE SCALE GENOMIC DNA]</scope>
    <source>
        <strain>RML369-C</strain>
    </source>
</reference>
<name>RL10_RICBR</name>
<keyword id="KW-0687">Ribonucleoprotein</keyword>
<keyword id="KW-0689">Ribosomal protein</keyword>
<keyword id="KW-0694">RNA-binding</keyword>
<keyword id="KW-0699">rRNA-binding</keyword>
<comment type="function">
    <text evidence="1">Forms part of the ribosomal stalk, playing a central role in the interaction of the ribosome with GTP-bound translation factors.</text>
</comment>
<comment type="subunit">
    <text evidence="1">Part of the ribosomal stalk of the 50S ribosomal subunit. The N-terminus interacts with L11 and the large rRNA to form the base of the stalk. The C-terminus forms an elongated spine to which L12 dimers bind in a sequential fashion forming a multimeric L10(L12)X complex.</text>
</comment>
<comment type="similarity">
    <text evidence="1">Belongs to the universal ribosomal protein uL10 family.</text>
</comment>
<proteinExistence type="inferred from homology"/>
<organism>
    <name type="scientific">Rickettsia bellii (strain RML369-C)</name>
    <dbReference type="NCBI Taxonomy" id="336407"/>
    <lineage>
        <taxon>Bacteria</taxon>
        <taxon>Pseudomonadati</taxon>
        <taxon>Pseudomonadota</taxon>
        <taxon>Alphaproteobacteria</taxon>
        <taxon>Rickettsiales</taxon>
        <taxon>Rickettsiaceae</taxon>
        <taxon>Rickettsieae</taxon>
        <taxon>Rickettsia</taxon>
        <taxon>belli group</taxon>
    </lineage>
</organism>
<accession>Q1RHC8</accession>
<protein>
    <recommendedName>
        <fullName evidence="1">Large ribosomal subunit protein uL10</fullName>
    </recommendedName>
    <alternativeName>
        <fullName evidence="2">50S ribosomal protein L10</fullName>
    </alternativeName>
</protein>